<comment type="catalytic activity">
    <reaction>
        <text>a fatty acyl-[ACP] + S-adenosyl-L-methionine = an N-acyl-L-homoserine lactone + S-methyl-5'-thioadenosine + holo-[ACP] + H(+)</text>
        <dbReference type="Rhea" id="RHEA:10096"/>
        <dbReference type="Rhea" id="RHEA-COMP:9685"/>
        <dbReference type="Rhea" id="RHEA-COMP:14125"/>
        <dbReference type="ChEBI" id="CHEBI:15378"/>
        <dbReference type="ChEBI" id="CHEBI:17509"/>
        <dbReference type="ChEBI" id="CHEBI:55474"/>
        <dbReference type="ChEBI" id="CHEBI:59789"/>
        <dbReference type="ChEBI" id="CHEBI:64479"/>
        <dbReference type="ChEBI" id="CHEBI:138651"/>
        <dbReference type="EC" id="2.3.1.184"/>
    </reaction>
</comment>
<comment type="similarity">
    <text evidence="1">Belongs to the LuxM / VanM family.</text>
</comment>
<proteinExistence type="inferred from homology"/>
<organism>
    <name type="scientific">Vibrio atlanticus (strain LGP32)</name>
    <name type="common">Vibrio splendidus (strain Mel32)</name>
    <dbReference type="NCBI Taxonomy" id="575788"/>
    <lineage>
        <taxon>Bacteria</taxon>
        <taxon>Pseudomonadati</taxon>
        <taxon>Pseudomonadota</taxon>
        <taxon>Gammaproteobacteria</taxon>
        <taxon>Vibrionales</taxon>
        <taxon>Vibrionaceae</taxon>
        <taxon>Vibrio</taxon>
    </lineage>
</organism>
<name>LUXM_VIBA3</name>
<evidence type="ECO:0000305" key="1"/>
<dbReference type="EC" id="2.3.1.184"/>
<dbReference type="EMBL" id="DQ987706">
    <property type="protein sequence ID" value="ABJ90449.1"/>
    <property type="molecule type" value="Genomic_DNA"/>
</dbReference>
<dbReference type="EMBL" id="FM954973">
    <property type="protein sequence ID" value="CAV25639.1"/>
    <property type="molecule type" value="Genomic_DNA"/>
</dbReference>
<dbReference type="STRING" id="575788.VS_II0261"/>
<dbReference type="KEGG" id="vsp:VS_II0261"/>
<dbReference type="PATRIC" id="fig|575788.5.peg.255"/>
<dbReference type="eggNOG" id="ENOG5031MRN">
    <property type="taxonomic scope" value="Bacteria"/>
</dbReference>
<dbReference type="HOGENOM" id="CLU_053516_0_0_6"/>
<dbReference type="Proteomes" id="UP000009100">
    <property type="component" value="Chromosome 2"/>
</dbReference>
<dbReference type="GO" id="GO:0061579">
    <property type="term" value="F:N-acyl homoserine lactone synthase activity"/>
    <property type="evidence" value="ECO:0007669"/>
    <property type="project" value="UniProtKB-EC"/>
</dbReference>
<dbReference type="GO" id="GO:0009372">
    <property type="term" value="P:quorum sensing"/>
    <property type="evidence" value="ECO:0007669"/>
    <property type="project" value="UniProtKB-KW"/>
</dbReference>
<dbReference type="InterPro" id="IPR035304">
    <property type="entry name" value="AHL_synthase"/>
</dbReference>
<dbReference type="Pfam" id="PF17327">
    <property type="entry name" value="AHL_synthase"/>
    <property type="match status" value="1"/>
</dbReference>
<protein>
    <recommendedName>
        <fullName>Acyl-homoserine-lactone synthase LuxM</fullName>
        <shortName>AHL synthase LuxM</shortName>
        <ecNumber>2.3.1.184</ecNumber>
    </recommendedName>
</protein>
<sequence>MELMSSLGSLLASSLPIEKKQHALVELVLHTYQPQQRTALFKTVTEYRRNQLELLFPEHQAKSDSVMFEVMDYRDLIQRYPNTLSTEVALLEEAVGQCYIHWLDFWCECEISAIKAKLPLSTHALYPMDLPIKDSAYYGVIIDQIENSQLIVQTPTRPQGLPISDAIALSNLEVFIKGEKWYEMLPLLHLSQTGKHFILLKHPTDEAFPTLVSSALIQDWSKYETWLSYAPPFCNDKWKYSLSRRGYEGLAELHIFTPPALSKCDSIPEFDNKFQLQLAEMQAVCEILRLTVSGNIQQKVYFLYLAQKEMLNLLHQAGYKIGFTIIDQPLILDFYKAIEPQAYLPLGYCDLNETNLLTYRGLWNIELMLKAFNHVNFRDYRRCLRENKNTAWQII</sequence>
<gene>
    <name type="primary">luxM</name>
    <name type="ordered locus">VS_II0261</name>
</gene>
<feature type="chain" id="PRO_0000379485" description="Acyl-homoserine-lactone synthase LuxM">
    <location>
        <begin position="1"/>
        <end position="395"/>
    </location>
</feature>
<accession>B7VQM9</accession>
<accession>Q000K6</accession>
<keyword id="KW-0071">Autoinducer synthesis</keyword>
<keyword id="KW-0673">Quorum sensing</keyword>
<keyword id="KW-0949">S-adenosyl-L-methionine</keyword>
<keyword id="KW-0808">Transferase</keyword>
<reference key="1">
    <citation type="journal article" date="2007" name="Appl. Environ. Microbiol.">
        <title>Construction of a Vibrio splendidus mutant lacking the metalloprotease gene vsm by use of a novel counterselectable suicide vector.</title>
        <authorList>
            <person name="Le Roux F."/>
            <person name="Binesse J."/>
            <person name="Saulnier D."/>
            <person name="Mazel D."/>
        </authorList>
    </citation>
    <scope>NUCLEOTIDE SEQUENCE [GENOMIC DNA]</scope>
</reference>
<reference key="2">
    <citation type="submission" date="2009-02" db="EMBL/GenBank/DDBJ databases">
        <title>Vibrio splendidus str. LGP32 complete genome.</title>
        <authorList>
            <person name="Mazel D."/>
            <person name="Le Roux F."/>
        </authorList>
    </citation>
    <scope>NUCLEOTIDE SEQUENCE [LARGE SCALE GENOMIC DNA]</scope>
    <source>
        <strain>LGP32</strain>
    </source>
</reference>